<protein>
    <recommendedName>
        <fullName evidence="1">Probable glycine dehydrogenase (decarboxylating) subunit 2</fullName>
        <ecNumber evidence="1">1.4.4.2</ecNumber>
    </recommendedName>
    <alternativeName>
        <fullName evidence="1">Glycine cleavage system P-protein subunit 2</fullName>
    </alternativeName>
    <alternativeName>
        <fullName evidence="1">Glycine decarboxylase subunit 2</fullName>
    </alternativeName>
    <alternativeName>
        <fullName evidence="1">Glycine dehydrogenase (aminomethyl-transferring) subunit 2</fullName>
    </alternativeName>
</protein>
<sequence length="509" mass="56584">MVWRQAKWDEPLIFELNNSGANRQGLLINKDDEIRSEIKEMKIPKNLLRENGPNLPSLSELEVVRHFIRLSQMNFGVDVGIMPLGSCTMKYNPKIEEKATAITESHHPLEDEDHVQGILEMIYELQNWFSEITGMDECSLQVPAGSAGEFAGVLMIKKYHEDHNRNYKDTMLVADTAHGTNPASAAMAGYKVMYVKSNGEGLVDMDILREIVNDKTAGFMLTNPNTLGLFEENILEISKIIHSANAILYYDGANLNGVLGIARPGDMGFDIVHLNLHKTFAVPHGGGGPGAGAICAKGELVNYLPYPMVEKVNGKYRLSKIPKNSVGKIATFYGNVGNLARSFAYLLGLGPQGVQMVGKMSTLATNYLIAKLRDIKELELIAPNRHRKHEVVFSVKQLMENYGVSANDVAKALLDSGFYAPTIYFPPIIEEALMIEPTETESKETLDMFAEALKKIVEDAKRNPEQLLKSPSNTSIARLDQAYANHPSTITPTYRVLKLRRMGKINYLK</sequence>
<organism>
    <name type="scientific">Saccharolobus islandicus (strain L.S.2.15 / Lassen #1)</name>
    <name type="common">Sulfolobus islandicus</name>
    <dbReference type="NCBI Taxonomy" id="429572"/>
    <lineage>
        <taxon>Archaea</taxon>
        <taxon>Thermoproteota</taxon>
        <taxon>Thermoprotei</taxon>
        <taxon>Sulfolobales</taxon>
        <taxon>Sulfolobaceae</taxon>
        <taxon>Saccharolobus</taxon>
    </lineage>
</organism>
<reference key="1">
    <citation type="journal article" date="2009" name="Proc. Natl. Acad. Sci. U.S.A.">
        <title>Biogeography of the Sulfolobus islandicus pan-genome.</title>
        <authorList>
            <person name="Reno M.L."/>
            <person name="Held N.L."/>
            <person name="Fields C.J."/>
            <person name="Burke P.V."/>
            <person name="Whitaker R.J."/>
        </authorList>
    </citation>
    <scope>NUCLEOTIDE SEQUENCE [LARGE SCALE GENOMIC DNA]</scope>
    <source>
        <strain>L.S.2.15 / Lassen #1</strain>
    </source>
</reference>
<keyword id="KW-0560">Oxidoreductase</keyword>
<keyword id="KW-0663">Pyridoxal phosphate</keyword>
<feature type="chain" id="PRO_1000212675" description="Probable glycine dehydrogenase (decarboxylating) subunit 2">
    <location>
        <begin position="1"/>
        <end position="509"/>
    </location>
</feature>
<feature type="modified residue" description="N6-(pyridoxal phosphate)lysine" evidence="1">
    <location>
        <position position="278"/>
    </location>
</feature>
<dbReference type="EC" id="1.4.4.2" evidence="1"/>
<dbReference type="EMBL" id="CP001399">
    <property type="protein sequence ID" value="ACP35399.1"/>
    <property type="molecule type" value="Genomic_DNA"/>
</dbReference>
<dbReference type="RefSeq" id="WP_012711310.1">
    <property type="nucleotide sequence ID" value="NC_012589.1"/>
</dbReference>
<dbReference type="SMR" id="C3MPT6"/>
<dbReference type="GeneID" id="84061617"/>
<dbReference type="KEGG" id="sis:LS215_1391"/>
<dbReference type="HOGENOM" id="CLU_004620_5_0_2"/>
<dbReference type="OrthoDB" id="371967at2157"/>
<dbReference type="Proteomes" id="UP000001747">
    <property type="component" value="Chromosome"/>
</dbReference>
<dbReference type="GO" id="GO:0005829">
    <property type="term" value="C:cytosol"/>
    <property type="evidence" value="ECO:0007669"/>
    <property type="project" value="TreeGrafter"/>
</dbReference>
<dbReference type="GO" id="GO:0005960">
    <property type="term" value="C:glycine cleavage complex"/>
    <property type="evidence" value="ECO:0007669"/>
    <property type="project" value="TreeGrafter"/>
</dbReference>
<dbReference type="GO" id="GO:0016594">
    <property type="term" value="F:glycine binding"/>
    <property type="evidence" value="ECO:0007669"/>
    <property type="project" value="TreeGrafter"/>
</dbReference>
<dbReference type="GO" id="GO:0004375">
    <property type="term" value="F:glycine dehydrogenase (decarboxylating) activity"/>
    <property type="evidence" value="ECO:0007669"/>
    <property type="project" value="UniProtKB-EC"/>
</dbReference>
<dbReference type="GO" id="GO:0030170">
    <property type="term" value="F:pyridoxal phosphate binding"/>
    <property type="evidence" value="ECO:0007669"/>
    <property type="project" value="TreeGrafter"/>
</dbReference>
<dbReference type="GO" id="GO:0019464">
    <property type="term" value="P:glycine decarboxylation via glycine cleavage system"/>
    <property type="evidence" value="ECO:0007669"/>
    <property type="project" value="UniProtKB-UniRule"/>
</dbReference>
<dbReference type="CDD" id="cd00613">
    <property type="entry name" value="GDC-P"/>
    <property type="match status" value="1"/>
</dbReference>
<dbReference type="FunFam" id="3.40.640.10:FF:000224">
    <property type="entry name" value="Probable glycine dehydrogenase (decarboxylating) subunit 2"/>
    <property type="match status" value="1"/>
</dbReference>
<dbReference type="FunFam" id="3.90.1150.10:FF:000014">
    <property type="entry name" value="Probable glycine dehydrogenase (decarboxylating) subunit 2"/>
    <property type="match status" value="1"/>
</dbReference>
<dbReference type="Gene3D" id="6.20.440.10">
    <property type="match status" value="1"/>
</dbReference>
<dbReference type="Gene3D" id="3.90.1150.10">
    <property type="entry name" value="Aspartate Aminotransferase, domain 1"/>
    <property type="match status" value="1"/>
</dbReference>
<dbReference type="Gene3D" id="3.40.640.10">
    <property type="entry name" value="Type I PLP-dependent aspartate aminotransferase-like (Major domain)"/>
    <property type="match status" value="1"/>
</dbReference>
<dbReference type="HAMAP" id="MF_00713">
    <property type="entry name" value="GcvPB"/>
    <property type="match status" value="1"/>
</dbReference>
<dbReference type="InterPro" id="IPR023012">
    <property type="entry name" value="GcvPB"/>
</dbReference>
<dbReference type="InterPro" id="IPR049316">
    <property type="entry name" value="GDC-P_C"/>
</dbReference>
<dbReference type="InterPro" id="IPR049315">
    <property type="entry name" value="GDC-P_N"/>
</dbReference>
<dbReference type="InterPro" id="IPR020581">
    <property type="entry name" value="GDC_P"/>
</dbReference>
<dbReference type="InterPro" id="IPR015424">
    <property type="entry name" value="PyrdxlP-dep_Trfase"/>
</dbReference>
<dbReference type="InterPro" id="IPR015421">
    <property type="entry name" value="PyrdxlP-dep_Trfase_major"/>
</dbReference>
<dbReference type="InterPro" id="IPR015422">
    <property type="entry name" value="PyrdxlP-dep_Trfase_small"/>
</dbReference>
<dbReference type="NCBIfam" id="NF003346">
    <property type="entry name" value="PRK04366.1"/>
    <property type="match status" value="1"/>
</dbReference>
<dbReference type="PANTHER" id="PTHR11773:SF1">
    <property type="entry name" value="GLYCINE DEHYDROGENASE (DECARBOXYLATING), MITOCHONDRIAL"/>
    <property type="match status" value="1"/>
</dbReference>
<dbReference type="PANTHER" id="PTHR11773">
    <property type="entry name" value="GLYCINE DEHYDROGENASE, DECARBOXYLATING"/>
    <property type="match status" value="1"/>
</dbReference>
<dbReference type="Pfam" id="PF21478">
    <property type="entry name" value="GcvP2_C"/>
    <property type="match status" value="1"/>
</dbReference>
<dbReference type="Pfam" id="PF02347">
    <property type="entry name" value="GDC-P"/>
    <property type="match status" value="1"/>
</dbReference>
<dbReference type="SUPFAM" id="SSF53383">
    <property type="entry name" value="PLP-dependent transferases"/>
    <property type="match status" value="1"/>
</dbReference>
<proteinExistence type="inferred from homology"/>
<gene>
    <name evidence="1" type="primary">gcvPB</name>
    <name type="ordered locus">LS215_1391</name>
</gene>
<evidence type="ECO:0000255" key="1">
    <source>
        <dbReference type="HAMAP-Rule" id="MF_00713"/>
    </source>
</evidence>
<name>GCSPB_SACI2</name>
<accession>C3MPT6</accession>
<comment type="function">
    <text evidence="1">The glycine cleavage system catalyzes the degradation of glycine. The P protein binds the alpha-amino group of glycine through its pyridoxal phosphate cofactor; CO(2) is released and the remaining methylamine moiety is then transferred to the lipoamide cofactor of the H protein.</text>
</comment>
<comment type="catalytic activity">
    <reaction evidence="1">
        <text>N(6)-[(R)-lipoyl]-L-lysyl-[glycine-cleavage complex H protein] + glycine + H(+) = N(6)-[(R)-S(8)-aminomethyldihydrolipoyl]-L-lysyl-[glycine-cleavage complex H protein] + CO2</text>
        <dbReference type="Rhea" id="RHEA:24304"/>
        <dbReference type="Rhea" id="RHEA-COMP:10494"/>
        <dbReference type="Rhea" id="RHEA-COMP:10495"/>
        <dbReference type="ChEBI" id="CHEBI:15378"/>
        <dbReference type="ChEBI" id="CHEBI:16526"/>
        <dbReference type="ChEBI" id="CHEBI:57305"/>
        <dbReference type="ChEBI" id="CHEBI:83099"/>
        <dbReference type="ChEBI" id="CHEBI:83143"/>
        <dbReference type="EC" id="1.4.4.2"/>
    </reaction>
</comment>
<comment type="cofactor">
    <cofactor evidence="1">
        <name>pyridoxal 5'-phosphate</name>
        <dbReference type="ChEBI" id="CHEBI:597326"/>
    </cofactor>
</comment>
<comment type="subunit">
    <text evidence="1">The glycine cleavage system is composed of four proteins: P, T, L and H. In this organism, the P 'protein' is a heterodimer of two subunits.</text>
</comment>
<comment type="similarity">
    <text evidence="1">Belongs to the GcvP family. C-terminal subunit subfamily.</text>
</comment>